<sequence>MAEPTEKRLVSETGVAARVAQIVEGPIEGLGFRLVRVKISNTNGCTVQIMAERPDGTMGVDECETVSRAISPILDLEDPVGGAYYLEISSPGIDRPLVRVSDFERWAGYEAKVELAVPMDGRKRFRGILGVPSADGATVPIDLPDVKPGLPSRIDLPLRDLGEAHLVLTDDLIRESLRRGSAPPQDGEDVDEEAGEAPEDEVPQVRFIPQPKRPKPKMDKKSDKKSDKPVKAKKPKPGGGIVTKAARLKNRDTLH</sequence>
<dbReference type="EMBL" id="CP001029">
    <property type="protein sequence ID" value="ACB80977.1"/>
    <property type="molecule type" value="Genomic_DNA"/>
</dbReference>
<dbReference type="RefSeq" id="WP_012454699.1">
    <property type="nucleotide sequence ID" value="NC_010725.1"/>
</dbReference>
<dbReference type="SMR" id="B1ZDR1"/>
<dbReference type="STRING" id="441620.Mpop_2822"/>
<dbReference type="KEGG" id="mpo:Mpop_2822"/>
<dbReference type="eggNOG" id="COG0779">
    <property type="taxonomic scope" value="Bacteria"/>
</dbReference>
<dbReference type="HOGENOM" id="CLU_070525_0_0_5"/>
<dbReference type="OrthoDB" id="9805006at2"/>
<dbReference type="Proteomes" id="UP000007136">
    <property type="component" value="Chromosome"/>
</dbReference>
<dbReference type="GO" id="GO:0005829">
    <property type="term" value="C:cytosol"/>
    <property type="evidence" value="ECO:0007669"/>
    <property type="project" value="TreeGrafter"/>
</dbReference>
<dbReference type="GO" id="GO:0000028">
    <property type="term" value="P:ribosomal small subunit assembly"/>
    <property type="evidence" value="ECO:0007669"/>
    <property type="project" value="TreeGrafter"/>
</dbReference>
<dbReference type="GO" id="GO:0006412">
    <property type="term" value="P:translation"/>
    <property type="evidence" value="ECO:0007669"/>
    <property type="project" value="TreeGrafter"/>
</dbReference>
<dbReference type="CDD" id="cd01734">
    <property type="entry name" value="YlxS_C"/>
    <property type="match status" value="1"/>
</dbReference>
<dbReference type="Gene3D" id="3.30.300.70">
    <property type="entry name" value="RimP-like superfamily, N-terminal"/>
    <property type="match status" value="1"/>
</dbReference>
<dbReference type="HAMAP" id="MF_01077">
    <property type="entry name" value="RimP"/>
    <property type="match status" value="1"/>
</dbReference>
<dbReference type="InterPro" id="IPR003728">
    <property type="entry name" value="Ribosome_maturation_RimP"/>
</dbReference>
<dbReference type="InterPro" id="IPR028998">
    <property type="entry name" value="RimP_C"/>
</dbReference>
<dbReference type="InterPro" id="IPR036847">
    <property type="entry name" value="RimP_C_sf"/>
</dbReference>
<dbReference type="InterPro" id="IPR028989">
    <property type="entry name" value="RimP_N"/>
</dbReference>
<dbReference type="InterPro" id="IPR035956">
    <property type="entry name" value="RimP_N_sf"/>
</dbReference>
<dbReference type="NCBIfam" id="NF000932">
    <property type="entry name" value="PRK00092.2-5"/>
    <property type="match status" value="1"/>
</dbReference>
<dbReference type="PANTHER" id="PTHR33867">
    <property type="entry name" value="RIBOSOME MATURATION FACTOR RIMP"/>
    <property type="match status" value="1"/>
</dbReference>
<dbReference type="PANTHER" id="PTHR33867:SF1">
    <property type="entry name" value="RIBOSOME MATURATION FACTOR RIMP"/>
    <property type="match status" value="1"/>
</dbReference>
<dbReference type="Pfam" id="PF17384">
    <property type="entry name" value="DUF150_C"/>
    <property type="match status" value="1"/>
</dbReference>
<dbReference type="Pfam" id="PF02576">
    <property type="entry name" value="RimP_N"/>
    <property type="match status" value="1"/>
</dbReference>
<dbReference type="SUPFAM" id="SSF74942">
    <property type="entry name" value="YhbC-like, C-terminal domain"/>
    <property type="match status" value="1"/>
</dbReference>
<dbReference type="SUPFAM" id="SSF75420">
    <property type="entry name" value="YhbC-like, N-terminal domain"/>
    <property type="match status" value="1"/>
</dbReference>
<proteinExistence type="inferred from homology"/>
<feature type="chain" id="PRO_0000384704" description="Ribosome maturation factor RimP">
    <location>
        <begin position="1"/>
        <end position="255"/>
    </location>
</feature>
<feature type="region of interest" description="Disordered" evidence="2">
    <location>
        <begin position="177"/>
        <end position="255"/>
    </location>
</feature>
<feature type="compositionally biased region" description="Acidic residues" evidence="2">
    <location>
        <begin position="186"/>
        <end position="202"/>
    </location>
</feature>
<feature type="compositionally biased region" description="Basic and acidic residues" evidence="2">
    <location>
        <begin position="216"/>
        <end position="230"/>
    </location>
</feature>
<evidence type="ECO:0000255" key="1">
    <source>
        <dbReference type="HAMAP-Rule" id="MF_01077"/>
    </source>
</evidence>
<evidence type="ECO:0000256" key="2">
    <source>
        <dbReference type="SAM" id="MobiDB-lite"/>
    </source>
</evidence>
<accession>B1ZDR1</accession>
<reference key="1">
    <citation type="submission" date="2008-04" db="EMBL/GenBank/DDBJ databases">
        <title>Complete sequence of chromosome of Methylobacterium populi BJ001.</title>
        <authorList>
            <consortium name="US DOE Joint Genome Institute"/>
            <person name="Copeland A."/>
            <person name="Lucas S."/>
            <person name="Lapidus A."/>
            <person name="Glavina del Rio T."/>
            <person name="Dalin E."/>
            <person name="Tice H."/>
            <person name="Bruce D."/>
            <person name="Goodwin L."/>
            <person name="Pitluck S."/>
            <person name="Chertkov O."/>
            <person name="Brettin T."/>
            <person name="Detter J.C."/>
            <person name="Han C."/>
            <person name="Kuske C.R."/>
            <person name="Schmutz J."/>
            <person name="Larimer F."/>
            <person name="Land M."/>
            <person name="Hauser L."/>
            <person name="Kyrpides N."/>
            <person name="Mikhailova N."/>
            <person name="Marx C."/>
            <person name="Richardson P."/>
        </authorList>
    </citation>
    <scope>NUCLEOTIDE SEQUENCE [LARGE SCALE GENOMIC DNA]</scope>
    <source>
        <strain>ATCC BAA-705 / NCIMB 13946 / BJ001</strain>
    </source>
</reference>
<organism>
    <name type="scientific">Methylorubrum populi (strain ATCC BAA-705 / NCIMB 13946 / BJ001)</name>
    <name type="common">Methylobacterium populi</name>
    <dbReference type="NCBI Taxonomy" id="441620"/>
    <lineage>
        <taxon>Bacteria</taxon>
        <taxon>Pseudomonadati</taxon>
        <taxon>Pseudomonadota</taxon>
        <taxon>Alphaproteobacteria</taxon>
        <taxon>Hyphomicrobiales</taxon>
        <taxon>Methylobacteriaceae</taxon>
        <taxon>Methylorubrum</taxon>
    </lineage>
</organism>
<comment type="function">
    <text evidence="1">Required for maturation of 30S ribosomal subunits.</text>
</comment>
<comment type="subcellular location">
    <subcellularLocation>
        <location evidence="1">Cytoplasm</location>
    </subcellularLocation>
</comment>
<comment type="similarity">
    <text evidence="1">Belongs to the RimP family.</text>
</comment>
<gene>
    <name evidence="1" type="primary">rimP</name>
    <name type="ordered locus">Mpop_2822</name>
</gene>
<keyword id="KW-0963">Cytoplasm</keyword>
<keyword id="KW-0690">Ribosome biogenesis</keyword>
<protein>
    <recommendedName>
        <fullName evidence="1">Ribosome maturation factor RimP</fullName>
    </recommendedName>
</protein>
<name>RIMP_METPB</name>